<feature type="chain" id="PRO_0000104560" description="Serpentine receptor class gamma-10">
    <location>
        <begin position="1"/>
        <end position="324"/>
    </location>
</feature>
<feature type="transmembrane region" description="Helical" evidence="1">
    <location>
        <begin position="39"/>
        <end position="59"/>
    </location>
</feature>
<feature type="transmembrane region" description="Helical" evidence="1">
    <location>
        <begin position="69"/>
        <end position="89"/>
    </location>
</feature>
<feature type="transmembrane region" description="Helical" evidence="1">
    <location>
        <begin position="91"/>
        <end position="111"/>
    </location>
</feature>
<feature type="transmembrane region" description="Helical" evidence="1">
    <location>
        <begin position="128"/>
        <end position="146"/>
    </location>
</feature>
<feature type="transmembrane region" description="Helical" evidence="1">
    <location>
        <begin position="155"/>
        <end position="175"/>
    </location>
</feature>
<feature type="transmembrane region" description="Helical" evidence="1">
    <location>
        <begin position="206"/>
        <end position="226"/>
    </location>
</feature>
<feature type="transmembrane region" description="Helical" evidence="1">
    <location>
        <begin position="246"/>
        <end position="266"/>
    </location>
</feature>
<feature type="transmembrane region" description="Helical" evidence="1">
    <location>
        <begin position="279"/>
        <end position="299"/>
    </location>
</feature>
<reference key="1">
    <citation type="journal article" date="1998" name="Science">
        <title>Genome sequence of the nematode C. elegans: a platform for investigating biology.</title>
        <authorList>
            <consortium name="The C. elegans sequencing consortium"/>
        </authorList>
    </citation>
    <scope>NUCLEOTIDE SEQUENCE [LARGE SCALE GENOMIC DNA]</scope>
    <source>
        <strain>Bristol N2</strain>
    </source>
</reference>
<protein>
    <recommendedName>
        <fullName>Serpentine receptor class gamma-10</fullName>
        <shortName>Protein srg-10</shortName>
    </recommendedName>
</protein>
<proteinExistence type="inferred from homology"/>
<comment type="subcellular location">
    <subcellularLocation>
        <location evidence="2">Membrane</location>
        <topology evidence="2">Multi-pass membrane protein</topology>
    </subcellularLocation>
</comment>
<comment type="similarity">
    <text evidence="2">Belongs to the nematode receptor-like protein srg family.</text>
</comment>
<sequence length="324" mass="37326">MNSSRVVFPANFSYEDPLPFECNEDPNVVLSLAMYGMQSSYLIVGAVLNVMIVYTVFHGNSYRDNSFYMLYCADAIVGIYINTAEVIFGRIFIYITPLCPIASPYFFTPSILTKMYYAALHYSLGFKTFSQIFMSFNRMTCVIFLMKHLKLWKQILKPVLIITFILPLGVIWKILLSRVYINPNGAGFSVNYKDYFPWANISILHLFHFTLCFVLVIIFFVATILGLTMLKQRIKSAERSLTIVTMIMAVQTVTFASIQIYFVFFAAYTPKIRSVLLQIVSFVFDSLYVFSPIALIVMSRQLRKDIFNLKDKETQISMYPNSEL</sequence>
<accession>P46568</accession>
<gene>
    <name type="primary">srg-10</name>
    <name type="ORF">T04A8.1</name>
</gene>
<evidence type="ECO:0000255" key="1"/>
<evidence type="ECO:0000305" key="2"/>
<keyword id="KW-0472">Membrane</keyword>
<keyword id="KW-1185">Reference proteome</keyword>
<keyword id="KW-0812">Transmembrane</keyword>
<keyword id="KW-1133">Transmembrane helix</keyword>
<name>SRG10_CAEEL</name>
<dbReference type="EMBL" id="Z35663">
    <property type="protein sequence ID" value="CAA84725.1"/>
    <property type="molecule type" value="Genomic_DNA"/>
</dbReference>
<dbReference type="PIR" id="T24424">
    <property type="entry name" value="T24424"/>
</dbReference>
<dbReference type="RefSeq" id="NP_497954.1">
    <property type="nucleotide sequence ID" value="NM_065553.1"/>
</dbReference>
<dbReference type="SMR" id="P46568"/>
<dbReference type="FunCoup" id="P46568">
    <property type="interactions" value="1"/>
</dbReference>
<dbReference type="PaxDb" id="6239-T04A8.1"/>
<dbReference type="EnsemblMetazoa" id="T04A8.1.1">
    <property type="protein sequence ID" value="T04A8.1.1"/>
    <property type="gene ID" value="WBGene00005168"/>
</dbReference>
<dbReference type="GeneID" id="191836"/>
<dbReference type="KEGG" id="cel:CELE_T04A8.1"/>
<dbReference type="UCSC" id="T04A8.1">
    <property type="organism name" value="c. elegans"/>
</dbReference>
<dbReference type="AGR" id="WB:WBGene00005168"/>
<dbReference type="CTD" id="191836"/>
<dbReference type="WormBase" id="T04A8.1">
    <property type="protein sequence ID" value="CE01064"/>
    <property type="gene ID" value="WBGene00005168"/>
    <property type="gene designation" value="srg-10"/>
</dbReference>
<dbReference type="eggNOG" id="ENOG502TGR1">
    <property type="taxonomic scope" value="Eukaryota"/>
</dbReference>
<dbReference type="GeneTree" id="ENSGT00970000195841"/>
<dbReference type="HOGENOM" id="CLU_061253_1_0_1"/>
<dbReference type="InParanoid" id="P46568"/>
<dbReference type="OMA" id="LFIYITP"/>
<dbReference type="OrthoDB" id="5808804at2759"/>
<dbReference type="PhylomeDB" id="P46568"/>
<dbReference type="PRO" id="PR:P46568"/>
<dbReference type="Proteomes" id="UP000001940">
    <property type="component" value="Chromosome III"/>
</dbReference>
<dbReference type="Bgee" id="WBGene00005168">
    <property type="expression patterns" value="Expressed in larva"/>
</dbReference>
<dbReference type="GO" id="GO:0016020">
    <property type="term" value="C:membrane"/>
    <property type="evidence" value="ECO:0007669"/>
    <property type="project" value="UniProtKB-SubCell"/>
</dbReference>
<dbReference type="GO" id="GO:0004888">
    <property type="term" value="F:transmembrane signaling receptor activity"/>
    <property type="evidence" value="ECO:0007669"/>
    <property type="project" value="InterPro"/>
</dbReference>
<dbReference type="GO" id="GO:0007606">
    <property type="term" value="P:sensory perception of chemical stimulus"/>
    <property type="evidence" value="ECO:0007669"/>
    <property type="project" value="InterPro"/>
</dbReference>
<dbReference type="Gene3D" id="1.20.1070.10">
    <property type="entry name" value="Rhodopsin 7-helix transmembrane proteins"/>
    <property type="match status" value="1"/>
</dbReference>
<dbReference type="InterPro" id="IPR000609">
    <property type="entry name" value="7TM_GPCR_serpentine_rcpt_Srg"/>
</dbReference>
<dbReference type="InterPro" id="IPR051119">
    <property type="entry name" value="Nematode_SR-like"/>
</dbReference>
<dbReference type="PANTHER" id="PTHR31627">
    <property type="entry name" value="SERPENTINE RECEPTOR CLASS GAMMA-RELATED"/>
    <property type="match status" value="1"/>
</dbReference>
<dbReference type="PANTHER" id="PTHR31627:SF3">
    <property type="entry name" value="SERPENTINE RECEPTOR CLASS GAMMA-RELATED"/>
    <property type="match status" value="1"/>
</dbReference>
<dbReference type="Pfam" id="PF02118">
    <property type="entry name" value="Srg"/>
    <property type="match status" value="1"/>
</dbReference>
<dbReference type="PRINTS" id="PR00698">
    <property type="entry name" value="TMPROTEINSRG"/>
</dbReference>
<dbReference type="SUPFAM" id="SSF81321">
    <property type="entry name" value="Family A G protein-coupled receptor-like"/>
    <property type="match status" value="1"/>
</dbReference>
<organism>
    <name type="scientific">Caenorhabditis elegans</name>
    <dbReference type="NCBI Taxonomy" id="6239"/>
    <lineage>
        <taxon>Eukaryota</taxon>
        <taxon>Metazoa</taxon>
        <taxon>Ecdysozoa</taxon>
        <taxon>Nematoda</taxon>
        <taxon>Chromadorea</taxon>
        <taxon>Rhabditida</taxon>
        <taxon>Rhabditina</taxon>
        <taxon>Rhabditomorpha</taxon>
        <taxon>Rhabditoidea</taxon>
        <taxon>Rhabditidae</taxon>
        <taxon>Peloderinae</taxon>
        <taxon>Caenorhabditis</taxon>
    </lineage>
</organism>